<feature type="chain" id="PRO_0000213750" description="Hydroxymethylglutaryl-CoA synthase, cytoplasmic">
    <location>
        <begin position="1"/>
        <end position="520"/>
    </location>
</feature>
<feature type="region of interest" description="Disordered" evidence="5">
    <location>
        <begin position="487"/>
        <end position="520"/>
    </location>
</feature>
<feature type="active site" description="Proton donor/acceptor" evidence="4">
    <location>
        <position position="95"/>
    </location>
</feature>
<feature type="active site" description="Acyl-thioester intermediate" evidence="4">
    <location>
        <position position="129"/>
    </location>
</feature>
<feature type="active site" description="Proton donor/acceptor" evidence="4">
    <location>
        <position position="264"/>
    </location>
</feature>
<feature type="binding site" evidence="2">
    <location>
        <position position="43"/>
    </location>
    <ligand>
        <name>(3S)-3-hydroxy-3-methylglutaryl-CoA</name>
        <dbReference type="ChEBI" id="CHEBI:43074"/>
    </ligand>
</feature>
<feature type="binding site" evidence="3">
    <location>
        <begin position="44"/>
        <end position="46"/>
    </location>
    <ligand>
        <name>CoA</name>
        <dbReference type="ChEBI" id="CHEBI:57287"/>
    </ligand>
</feature>
<feature type="binding site" evidence="2">
    <location>
        <position position="44"/>
    </location>
    <ligand>
        <name>(3S)-3-hydroxy-3-methylglutaryl-CoA</name>
        <dbReference type="ChEBI" id="CHEBI:43074"/>
    </ligand>
</feature>
<feature type="binding site" evidence="2">
    <location>
        <position position="129"/>
    </location>
    <ligand>
        <name>(3S)-3-hydroxy-3-methylglutaryl-CoA</name>
        <dbReference type="ChEBI" id="CHEBI:43074"/>
    </ligand>
</feature>
<feature type="binding site" evidence="2">
    <location>
        <position position="167"/>
    </location>
    <ligand>
        <name>(3S)-3-hydroxy-3-methylglutaryl-CoA</name>
        <dbReference type="ChEBI" id="CHEBI:43074"/>
    </ligand>
</feature>
<feature type="binding site" evidence="3">
    <location>
        <position position="167"/>
    </location>
    <ligand>
        <name>CoA</name>
        <dbReference type="ChEBI" id="CHEBI:57287"/>
    </ligand>
</feature>
<feature type="binding site" evidence="2">
    <location>
        <position position="171"/>
    </location>
    <ligand>
        <name>(3S)-3-hydroxy-3-methylglutaryl-CoA</name>
        <dbReference type="ChEBI" id="CHEBI:43074"/>
    </ligand>
</feature>
<feature type="binding site" evidence="2">
    <location>
        <position position="221"/>
    </location>
    <ligand>
        <name>(3S)-3-hydroxy-3-methylglutaryl-CoA</name>
        <dbReference type="ChEBI" id="CHEBI:43074"/>
    </ligand>
</feature>
<feature type="binding site" evidence="3">
    <location>
        <position position="221"/>
    </location>
    <ligand>
        <name>CoA</name>
        <dbReference type="ChEBI" id="CHEBI:57287"/>
    </ligand>
</feature>
<feature type="binding site" evidence="2">
    <location>
        <position position="264"/>
    </location>
    <ligand>
        <name>(3S)-3-hydroxy-3-methylglutaryl-CoA</name>
        <dbReference type="ChEBI" id="CHEBI:43074"/>
    </ligand>
</feature>
<feature type="binding site" evidence="3">
    <location>
        <position position="269"/>
    </location>
    <ligand>
        <name>CoA</name>
        <dbReference type="ChEBI" id="CHEBI:57287"/>
    </ligand>
</feature>
<feature type="binding site" evidence="2">
    <location>
        <position position="273"/>
    </location>
    <ligand>
        <name>(3S)-3-hydroxy-3-methylglutaryl-CoA</name>
        <dbReference type="ChEBI" id="CHEBI:43074"/>
    </ligand>
</feature>
<feature type="binding site" evidence="3">
    <location>
        <position position="273"/>
    </location>
    <ligand>
        <name>CoA</name>
        <dbReference type="ChEBI" id="CHEBI:57287"/>
    </ligand>
</feature>
<feature type="binding site" evidence="2">
    <location>
        <position position="343"/>
    </location>
    <ligand>
        <name>(3S)-3-hydroxy-3-methylglutaryl-CoA</name>
        <dbReference type="ChEBI" id="CHEBI:43074"/>
    </ligand>
</feature>
<feature type="binding site" evidence="2">
    <location>
        <position position="377"/>
    </location>
    <ligand>
        <name>(3S)-3-hydroxy-3-methylglutaryl-CoA</name>
        <dbReference type="ChEBI" id="CHEBI:43074"/>
    </ligand>
</feature>
<feature type="modified residue" description="Phosphoserine" evidence="3">
    <location>
        <position position="4"/>
    </location>
</feature>
<feature type="modified residue" description="N6-acetyllysine" evidence="3">
    <location>
        <position position="46"/>
    </location>
</feature>
<feature type="modified residue" description="N6-acetyllysine" evidence="3">
    <location>
        <position position="273"/>
    </location>
</feature>
<feature type="modified residue" description="Phosphoserine" evidence="3">
    <location>
        <position position="495"/>
    </location>
</feature>
<feature type="modified residue" description="Phosphoserine" evidence="3">
    <location>
        <position position="516"/>
    </location>
</feature>
<reference key="1">
    <citation type="journal article" date="1990" name="Nucleic Acids Res.">
        <title>Nucleotide sequence of a rat liver cDNA encoding the cytosolic 3-hydroxy-3-methylglutaryl coenzyme A synthase.</title>
        <authorList>
            <person name="Ayte J."/>
            <person name="Gil-Gomez G."/>
            <person name="Hegardt F.G."/>
        </authorList>
    </citation>
    <scope>NUCLEOTIDE SEQUENCE [MRNA]</scope>
    <source>
        <strain>Sprague-Dawley</strain>
        <tissue>Liver</tissue>
    </source>
</reference>
<reference key="2">
    <citation type="submission" date="2007-04" db="UniProtKB">
        <authorList>
            <person name="Lubec G."/>
            <person name="Afjehi-Sadat L."/>
            <person name="Chen W.-Q."/>
        </authorList>
    </citation>
    <scope>PROTEIN SEQUENCE OF 90-100; 220-231; 278-289; 292-305; 370-387 AND 401-409</scope>
    <scope>IDENTIFICATION BY MASS SPECTROMETRY</scope>
    <source>
        <strain>Sprague-Dawley</strain>
        <tissue>Hippocampus</tissue>
        <tissue>Spinal cord</tissue>
    </source>
</reference>
<accession>P17425</accession>
<protein>
    <recommendedName>
        <fullName evidence="6">Hydroxymethylglutaryl-CoA synthase, cytoplasmic</fullName>
        <shortName evidence="3">HMG-CoA synthase</shortName>
        <ecNumber evidence="3">2.3.3.10</ecNumber>
    </recommendedName>
    <alternativeName>
        <fullName>3-hydroxy-3-methylglutaryl coenzyme A synthase</fullName>
    </alternativeName>
</protein>
<keyword id="KW-0007">Acetylation</keyword>
<keyword id="KW-0152">Cholesterol biosynthesis</keyword>
<keyword id="KW-0153">Cholesterol metabolism</keyword>
<keyword id="KW-0963">Cytoplasm</keyword>
<keyword id="KW-0903">Direct protein sequencing</keyword>
<keyword id="KW-0444">Lipid biosynthesis</keyword>
<keyword id="KW-0443">Lipid metabolism</keyword>
<keyword id="KW-0597">Phosphoprotein</keyword>
<keyword id="KW-1185">Reference proteome</keyword>
<keyword id="KW-0752">Steroid biosynthesis</keyword>
<keyword id="KW-0753">Steroid metabolism</keyword>
<keyword id="KW-0756">Sterol biosynthesis</keyword>
<keyword id="KW-1207">Sterol metabolism</keyword>
<keyword id="KW-0808">Transferase</keyword>
<comment type="function">
    <text evidence="1">Catalyzes the condensation of acetyl-CoA with acetoacetyl-CoA to form HMG-CoA, which is converted by HMG-CoA reductase (HMGCR) into mevalonate, a precursor for cholesterol synthesis.</text>
</comment>
<comment type="catalytic activity">
    <reaction evidence="3">
        <text>acetoacetyl-CoA + acetyl-CoA + H2O = (3S)-3-hydroxy-3-methylglutaryl-CoA + CoA + H(+)</text>
        <dbReference type="Rhea" id="RHEA:10188"/>
        <dbReference type="ChEBI" id="CHEBI:15377"/>
        <dbReference type="ChEBI" id="CHEBI:15378"/>
        <dbReference type="ChEBI" id="CHEBI:43074"/>
        <dbReference type="ChEBI" id="CHEBI:57286"/>
        <dbReference type="ChEBI" id="CHEBI:57287"/>
        <dbReference type="ChEBI" id="CHEBI:57288"/>
        <dbReference type="EC" id="2.3.3.10"/>
    </reaction>
    <physiologicalReaction direction="left-to-right" evidence="3">
        <dbReference type="Rhea" id="RHEA:10189"/>
    </physiologicalReaction>
</comment>
<comment type="pathway">
    <text>Metabolic intermediate biosynthesis; (R)-mevalonate biosynthesis; (R)-mevalonate from acetyl-CoA: step 2/3.</text>
</comment>
<comment type="subunit">
    <text evidence="3">Homodimer.</text>
</comment>
<comment type="subcellular location">
    <subcellularLocation>
        <location evidence="1">Cytoplasm</location>
    </subcellularLocation>
</comment>
<comment type="similarity">
    <text evidence="6">Belongs to the thiolase-like superfamily. HMG-CoA synthase family.</text>
</comment>
<evidence type="ECO:0000250" key="1">
    <source>
        <dbReference type="UniProtKB" id="P13704"/>
    </source>
</evidence>
<evidence type="ECO:0000250" key="2">
    <source>
        <dbReference type="UniProtKB" id="P54868"/>
    </source>
</evidence>
<evidence type="ECO:0000250" key="3">
    <source>
        <dbReference type="UniProtKB" id="Q01581"/>
    </source>
</evidence>
<evidence type="ECO:0000255" key="4">
    <source>
        <dbReference type="PROSITE-ProRule" id="PRU10116"/>
    </source>
</evidence>
<evidence type="ECO:0000256" key="5">
    <source>
        <dbReference type="SAM" id="MobiDB-lite"/>
    </source>
</evidence>
<evidence type="ECO:0000305" key="6"/>
<evidence type="ECO:0000312" key="7">
    <source>
        <dbReference type="RGD" id="70970"/>
    </source>
</evidence>
<proteinExistence type="evidence at protein level"/>
<gene>
    <name evidence="7" type="primary">Hmgcs1</name>
    <name type="synonym">Hmgcs</name>
</gene>
<organism>
    <name type="scientific">Rattus norvegicus</name>
    <name type="common">Rat</name>
    <dbReference type="NCBI Taxonomy" id="10116"/>
    <lineage>
        <taxon>Eukaryota</taxon>
        <taxon>Metazoa</taxon>
        <taxon>Chordata</taxon>
        <taxon>Craniata</taxon>
        <taxon>Vertebrata</taxon>
        <taxon>Euteleostomi</taxon>
        <taxon>Mammalia</taxon>
        <taxon>Eutheria</taxon>
        <taxon>Euarchontoglires</taxon>
        <taxon>Glires</taxon>
        <taxon>Rodentia</taxon>
        <taxon>Myomorpha</taxon>
        <taxon>Muroidea</taxon>
        <taxon>Muridae</taxon>
        <taxon>Murinae</taxon>
        <taxon>Rattus</taxon>
    </lineage>
</organism>
<name>HMCS1_RAT</name>
<dbReference type="EC" id="2.3.3.10" evidence="3"/>
<dbReference type="EMBL" id="X52625">
    <property type="protein sequence ID" value="CAA36852.1"/>
    <property type="molecule type" value="mRNA"/>
</dbReference>
<dbReference type="PIR" id="S12736">
    <property type="entry name" value="S12736"/>
</dbReference>
<dbReference type="RefSeq" id="NP_058964.1">
    <property type="nucleotide sequence ID" value="NM_017268.2"/>
</dbReference>
<dbReference type="RefSeq" id="XP_006232021.1">
    <property type="nucleotide sequence ID" value="XM_006231959.3"/>
</dbReference>
<dbReference type="SMR" id="P17425"/>
<dbReference type="FunCoup" id="P17425">
    <property type="interactions" value="1932"/>
</dbReference>
<dbReference type="IntAct" id="P17425">
    <property type="interactions" value="2"/>
</dbReference>
<dbReference type="STRING" id="10116.ENSRNOP00000023554"/>
<dbReference type="BindingDB" id="P17425"/>
<dbReference type="ChEMBL" id="CHEMBL2189"/>
<dbReference type="GuidetoPHARMACOLOGY" id="638"/>
<dbReference type="GlyGen" id="P17425">
    <property type="glycosylation" value="2 sites, 1 O-linked glycan (1 site)"/>
</dbReference>
<dbReference type="iPTMnet" id="P17425"/>
<dbReference type="PhosphoSitePlus" id="P17425"/>
<dbReference type="SwissPalm" id="P17425"/>
<dbReference type="jPOST" id="P17425"/>
<dbReference type="PaxDb" id="10116-ENSRNOP00000023554"/>
<dbReference type="Ensembl" id="ENSRNOT00000023554.7">
    <property type="protein sequence ID" value="ENSRNOP00000023554.3"/>
    <property type="gene ID" value="ENSRNOG00000016552.7"/>
</dbReference>
<dbReference type="GeneID" id="29637"/>
<dbReference type="KEGG" id="rno:29637"/>
<dbReference type="AGR" id="RGD:70970"/>
<dbReference type="CTD" id="3157"/>
<dbReference type="RGD" id="70970">
    <property type="gene designation" value="Hmgcs1"/>
</dbReference>
<dbReference type="eggNOG" id="KOG1393">
    <property type="taxonomic scope" value="Eukaryota"/>
</dbReference>
<dbReference type="GeneTree" id="ENSGT00390000006096"/>
<dbReference type="HOGENOM" id="CLU_008065_0_1_1"/>
<dbReference type="InParanoid" id="P17425"/>
<dbReference type="PhylomeDB" id="P17425"/>
<dbReference type="TreeFam" id="TF105361"/>
<dbReference type="BRENDA" id="2.3.3.10">
    <property type="organism ID" value="5301"/>
</dbReference>
<dbReference type="Reactome" id="R-RNO-191273">
    <property type="pathway name" value="Cholesterol biosynthesis"/>
</dbReference>
<dbReference type="UniPathway" id="UPA00058">
    <property type="reaction ID" value="UER00102"/>
</dbReference>
<dbReference type="PRO" id="PR:P17425"/>
<dbReference type="Proteomes" id="UP000002494">
    <property type="component" value="Chromosome 2"/>
</dbReference>
<dbReference type="Bgee" id="ENSRNOG00000016552">
    <property type="expression patterns" value="Expressed in liver and 20 other cell types or tissues"/>
</dbReference>
<dbReference type="GO" id="GO:0005737">
    <property type="term" value="C:cytoplasm"/>
    <property type="evidence" value="ECO:0007669"/>
    <property type="project" value="UniProtKB-SubCell"/>
</dbReference>
<dbReference type="GO" id="GO:0004421">
    <property type="term" value="F:hydroxymethylglutaryl-CoA synthase activity"/>
    <property type="evidence" value="ECO:0000314"/>
    <property type="project" value="RGD"/>
</dbReference>
<dbReference type="GO" id="GO:0016853">
    <property type="term" value="F:isomerase activity"/>
    <property type="evidence" value="ECO:0000314"/>
    <property type="project" value="RGD"/>
</dbReference>
<dbReference type="GO" id="GO:0043177">
    <property type="term" value="F:organic acid binding"/>
    <property type="evidence" value="ECO:0000314"/>
    <property type="project" value="RGD"/>
</dbReference>
<dbReference type="GO" id="GO:0042803">
    <property type="term" value="F:protein homodimerization activity"/>
    <property type="evidence" value="ECO:0000266"/>
    <property type="project" value="RGD"/>
</dbReference>
<dbReference type="GO" id="GO:0036094">
    <property type="term" value="F:small molecule binding"/>
    <property type="evidence" value="ECO:0000314"/>
    <property type="project" value="RGD"/>
</dbReference>
<dbReference type="GO" id="GO:0006084">
    <property type="term" value="P:acetyl-CoA metabolic process"/>
    <property type="evidence" value="ECO:0000318"/>
    <property type="project" value="GO_Central"/>
</dbReference>
<dbReference type="GO" id="GO:0071397">
    <property type="term" value="P:cellular response to cholesterol"/>
    <property type="evidence" value="ECO:0000270"/>
    <property type="project" value="RGD"/>
</dbReference>
<dbReference type="GO" id="GO:0071372">
    <property type="term" value="P:cellular response to follicle-stimulating hormone stimulus"/>
    <property type="evidence" value="ECO:0000270"/>
    <property type="project" value="RGD"/>
</dbReference>
<dbReference type="GO" id="GO:0071404">
    <property type="term" value="P:cellular response to low-density lipoprotein particle stimulus"/>
    <property type="evidence" value="ECO:0000314"/>
    <property type="project" value="RGD"/>
</dbReference>
<dbReference type="GO" id="GO:0006695">
    <property type="term" value="P:cholesterol biosynthetic process"/>
    <property type="evidence" value="ECO:0007669"/>
    <property type="project" value="UniProtKB-KW"/>
</dbReference>
<dbReference type="GO" id="GO:0010142">
    <property type="term" value="P:farnesyl diphosphate biosynthetic process, mevalonate pathway"/>
    <property type="evidence" value="ECO:0000318"/>
    <property type="project" value="GO_Central"/>
</dbReference>
<dbReference type="GO" id="GO:0001889">
    <property type="term" value="P:liver development"/>
    <property type="evidence" value="ECO:0000270"/>
    <property type="project" value="RGD"/>
</dbReference>
<dbReference type="GO" id="GO:0008584">
    <property type="term" value="P:male gonad development"/>
    <property type="evidence" value="ECO:0000270"/>
    <property type="project" value="RGD"/>
</dbReference>
<dbReference type="GO" id="GO:0070723">
    <property type="term" value="P:response to cholesterol"/>
    <property type="evidence" value="ECO:0000270"/>
    <property type="project" value="RGD"/>
</dbReference>
<dbReference type="GO" id="GO:0034698">
    <property type="term" value="P:response to gonadotropin"/>
    <property type="evidence" value="ECO:0000270"/>
    <property type="project" value="RGD"/>
</dbReference>
<dbReference type="GO" id="GO:0009725">
    <property type="term" value="P:response to hormone"/>
    <property type="evidence" value="ECO:0000270"/>
    <property type="project" value="RGD"/>
</dbReference>
<dbReference type="GO" id="GO:0009645">
    <property type="term" value="P:response to low light intensity stimulus"/>
    <property type="evidence" value="ECO:0000270"/>
    <property type="project" value="RGD"/>
</dbReference>
<dbReference type="GO" id="GO:0014074">
    <property type="term" value="P:response to purine-containing compound"/>
    <property type="evidence" value="ECO:0000314"/>
    <property type="project" value="RGD"/>
</dbReference>
<dbReference type="GO" id="GO:0046690">
    <property type="term" value="P:response to tellurium ion"/>
    <property type="evidence" value="ECO:0000270"/>
    <property type="project" value="RGD"/>
</dbReference>
<dbReference type="GO" id="GO:0033197">
    <property type="term" value="P:response to vitamin E"/>
    <property type="evidence" value="ECO:0000270"/>
    <property type="project" value="RGD"/>
</dbReference>
<dbReference type="GO" id="GO:0009410">
    <property type="term" value="P:response to xenobiotic stimulus"/>
    <property type="evidence" value="ECO:0000270"/>
    <property type="project" value="RGD"/>
</dbReference>
<dbReference type="CDD" id="cd00827">
    <property type="entry name" value="init_cond_enzymes"/>
    <property type="match status" value="1"/>
</dbReference>
<dbReference type="FunFam" id="3.40.47.10:FF:000008">
    <property type="entry name" value="3-hydroxy-3-methylglutaryl coenzyme A synthase"/>
    <property type="match status" value="1"/>
</dbReference>
<dbReference type="Gene3D" id="3.40.47.10">
    <property type="match status" value="1"/>
</dbReference>
<dbReference type="InterPro" id="IPR000590">
    <property type="entry name" value="HMG_CoA_synt_AS"/>
</dbReference>
<dbReference type="InterPro" id="IPR013746">
    <property type="entry name" value="HMG_CoA_synt_C_dom"/>
</dbReference>
<dbReference type="InterPro" id="IPR013528">
    <property type="entry name" value="HMG_CoA_synth_N"/>
</dbReference>
<dbReference type="InterPro" id="IPR010122">
    <property type="entry name" value="HMG_CoA_synthase_euk"/>
</dbReference>
<dbReference type="InterPro" id="IPR016039">
    <property type="entry name" value="Thiolase-like"/>
</dbReference>
<dbReference type="NCBIfam" id="TIGR01833">
    <property type="entry name" value="HMG-CoA-S_euk"/>
    <property type="match status" value="1"/>
</dbReference>
<dbReference type="PANTHER" id="PTHR43323">
    <property type="entry name" value="3-HYDROXY-3-METHYLGLUTARYL COENZYME A SYNTHASE"/>
    <property type="match status" value="1"/>
</dbReference>
<dbReference type="PANTHER" id="PTHR43323:SF4">
    <property type="entry name" value="HYDROXYMETHYLGLUTARYL-COA SYNTHASE, CYTOPLASMIC"/>
    <property type="match status" value="1"/>
</dbReference>
<dbReference type="Pfam" id="PF08540">
    <property type="entry name" value="HMG_CoA_synt_C"/>
    <property type="match status" value="1"/>
</dbReference>
<dbReference type="Pfam" id="PF01154">
    <property type="entry name" value="HMG_CoA_synt_N"/>
    <property type="match status" value="1"/>
</dbReference>
<dbReference type="SUPFAM" id="SSF53901">
    <property type="entry name" value="Thiolase-like"/>
    <property type="match status" value="2"/>
</dbReference>
<dbReference type="PROSITE" id="PS01226">
    <property type="entry name" value="HMG_COA_SYNTHASE"/>
    <property type="match status" value="1"/>
</dbReference>
<sequence length="520" mass="57434">MPGSLPLNAEACWPKDVGIVALEIYFPSQYVDQAELEKYDGVDAGKYTIGLGQARMGFCTDREDINSLCLTVVQKLMERNSLSYDCIGRLEVGTETIIDKSKSVKSNLMQLFEESGNTDIEGIDTTNACYGGTAAVFNAVNWIESSSWDGRYALVVAGDIAIYASGNARPTGGVGAVALLIGPNAPVIFDRGLRGTHMQHAYDFYKPDMLSEYPVVDGKLSIQCYLSALDRCYSVYRKKIRAQWQKEGKDKDFTLNDFGFMIFHSPYCKLVQKSLARMFLNDFLNDQNRDKNSIYSGLEAFGDVKLEDTYFDRDVEKAFMKASAELFNQKTKASLLVSNQNGNMYTSSVYGSLASVLAQYSPQQLAGKRIGVFSYGSGLAATLYSLKVTQDATPGSALDKITASLCDLKSRLDSRTCVAPDVFAENMKLREDTHHLANYIPQCSIDSLFEGTWYLVRVDEKHRRTYARRPSTNDHSLDEGVGLVHSNTATEHIPSPAKKVPRLPATSGEPESAVISNGEH</sequence>